<protein>
    <recommendedName>
        <fullName evidence="1">Urease subunit gamma</fullName>
        <ecNumber evidence="1">3.5.1.5</ecNumber>
    </recommendedName>
    <alternativeName>
        <fullName evidence="1">Urea amidohydrolase subunit gamma</fullName>
    </alternativeName>
</protein>
<reference key="1">
    <citation type="journal article" date="2007" name="Genes Dev.">
        <title>New insights into Acinetobacter baumannii pathogenesis revealed by high-density pyrosequencing and transposon mutagenesis.</title>
        <authorList>
            <person name="Smith M.G."/>
            <person name="Gianoulis T.A."/>
            <person name="Pukatzki S."/>
            <person name="Mekalanos J.J."/>
            <person name="Ornston L.N."/>
            <person name="Gerstein M."/>
            <person name="Snyder M."/>
        </authorList>
    </citation>
    <scope>NUCLEOTIDE SEQUENCE [LARGE SCALE GENOMIC DNA]</scope>
    <source>
        <strain>ATCC 17978 / DSM 105126 / CIP 53.77 / LMG 1025 / NCDC KC755 / 5377</strain>
    </source>
</reference>
<accession>A3M3F0</accession>
<gene>
    <name evidence="1" type="primary">ureA</name>
    <name type="ordered locus">A1S_1012</name>
</gene>
<dbReference type="EC" id="3.5.1.5" evidence="1"/>
<dbReference type="EMBL" id="CP000521">
    <property type="protein sequence ID" value="ABO11444.2"/>
    <property type="molecule type" value="Genomic_DNA"/>
</dbReference>
<dbReference type="RefSeq" id="WP_000422460.1">
    <property type="nucleotide sequence ID" value="NZ_CP053098.1"/>
</dbReference>
<dbReference type="SMR" id="A3M3F0"/>
<dbReference type="GeneID" id="92892975"/>
<dbReference type="KEGG" id="acb:A1S_1012"/>
<dbReference type="HOGENOM" id="CLU_145825_1_0_6"/>
<dbReference type="UniPathway" id="UPA00258">
    <property type="reaction ID" value="UER00370"/>
</dbReference>
<dbReference type="GO" id="GO:0005737">
    <property type="term" value="C:cytoplasm"/>
    <property type="evidence" value="ECO:0007669"/>
    <property type="project" value="UniProtKB-SubCell"/>
</dbReference>
<dbReference type="GO" id="GO:0016151">
    <property type="term" value="F:nickel cation binding"/>
    <property type="evidence" value="ECO:0007669"/>
    <property type="project" value="InterPro"/>
</dbReference>
<dbReference type="GO" id="GO:0009039">
    <property type="term" value="F:urease activity"/>
    <property type="evidence" value="ECO:0007669"/>
    <property type="project" value="UniProtKB-UniRule"/>
</dbReference>
<dbReference type="GO" id="GO:0043419">
    <property type="term" value="P:urea catabolic process"/>
    <property type="evidence" value="ECO:0007669"/>
    <property type="project" value="UniProtKB-UniRule"/>
</dbReference>
<dbReference type="CDD" id="cd00390">
    <property type="entry name" value="Urease_gamma"/>
    <property type="match status" value="1"/>
</dbReference>
<dbReference type="Gene3D" id="3.30.280.10">
    <property type="entry name" value="Urease, gamma-like subunit"/>
    <property type="match status" value="1"/>
</dbReference>
<dbReference type="HAMAP" id="MF_00739">
    <property type="entry name" value="Urease_gamma"/>
    <property type="match status" value="1"/>
</dbReference>
<dbReference type="InterPro" id="IPR012010">
    <property type="entry name" value="Urease_gamma"/>
</dbReference>
<dbReference type="InterPro" id="IPR002026">
    <property type="entry name" value="Urease_gamma/gamma-beta_su"/>
</dbReference>
<dbReference type="InterPro" id="IPR036463">
    <property type="entry name" value="Urease_gamma_sf"/>
</dbReference>
<dbReference type="InterPro" id="IPR050069">
    <property type="entry name" value="Urease_subunit"/>
</dbReference>
<dbReference type="NCBIfam" id="NF009712">
    <property type="entry name" value="PRK13241.1"/>
    <property type="match status" value="1"/>
</dbReference>
<dbReference type="NCBIfam" id="TIGR00193">
    <property type="entry name" value="urease_gam"/>
    <property type="match status" value="1"/>
</dbReference>
<dbReference type="PANTHER" id="PTHR33569">
    <property type="entry name" value="UREASE"/>
    <property type="match status" value="1"/>
</dbReference>
<dbReference type="PANTHER" id="PTHR33569:SF1">
    <property type="entry name" value="UREASE"/>
    <property type="match status" value="1"/>
</dbReference>
<dbReference type="Pfam" id="PF00547">
    <property type="entry name" value="Urease_gamma"/>
    <property type="match status" value="1"/>
</dbReference>
<dbReference type="PIRSF" id="PIRSF001223">
    <property type="entry name" value="Urease_gamma"/>
    <property type="match status" value="1"/>
</dbReference>
<dbReference type="SUPFAM" id="SSF54111">
    <property type="entry name" value="Urease, gamma-subunit"/>
    <property type="match status" value="1"/>
</dbReference>
<proteinExistence type="inferred from homology"/>
<organism>
    <name type="scientific">Acinetobacter baumannii (strain ATCC 17978 / DSM 105126 / CIP 53.77 / LMG 1025 / NCDC KC755 / 5377)</name>
    <dbReference type="NCBI Taxonomy" id="400667"/>
    <lineage>
        <taxon>Bacteria</taxon>
        <taxon>Pseudomonadati</taxon>
        <taxon>Pseudomonadota</taxon>
        <taxon>Gammaproteobacteria</taxon>
        <taxon>Moraxellales</taxon>
        <taxon>Moraxellaceae</taxon>
        <taxon>Acinetobacter</taxon>
        <taxon>Acinetobacter calcoaceticus/baumannii complex</taxon>
    </lineage>
</organism>
<keyword id="KW-0963">Cytoplasm</keyword>
<keyword id="KW-0378">Hydrolase</keyword>
<feature type="chain" id="PRO_1000199843" description="Urease subunit gamma">
    <location>
        <begin position="1"/>
        <end position="100"/>
    </location>
</feature>
<evidence type="ECO:0000255" key="1">
    <source>
        <dbReference type="HAMAP-Rule" id="MF_00739"/>
    </source>
</evidence>
<name>URE3_ACIBT</name>
<sequence>MELNPTEKDKLLIFTAGLVAERRKARGLKLNYPEAVAFISAALLEGARDGMTVSELMHFGTTLLKREDVMDGVPEMIAEVQVEATFPDGSKLVTVHQPIV</sequence>
<comment type="catalytic activity">
    <reaction evidence="1">
        <text>urea + 2 H2O + H(+) = hydrogencarbonate + 2 NH4(+)</text>
        <dbReference type="Rhea" id="RHEA:20557"/>
        <dbReference type="ChEBI" id="CHEBI:15377"/>
        <dbReference type="ChEBI" id="CHEBI:15378"/>
        <dbReference type="ChEBI" id="CHEBI:16199"/>
        <dbReference type="ChEBI" id="CHEBI:17544"/>
        <dbReference type="ChEBI" id="CHEBI:28938"/>
        <dbReference type="EC" id="3.5.1.5"/>
    </reaction>
</comment>
<comment type="pathway">
    <text evidence="1">Nitrogen metabolism; urea degradation; CO(2) and NH(3) from urea (urease route): step 1/1.</text>
</comment>
<comment type="subunit">
    <text evidence="1">Heterotrimer of UreA (gamma), UreB (beta) and UreC (alpha) subunits. Three heterotrimers associate to form the active enzyme.</text>
</comment>
<comment type="subcellular location">
    <subcellularLocation>
        <location evidence="1">Cytoplasm</location>
    </subcellularLocation>
</comment>
<comment type="similarity">
    <text evidence="1">Belongs to the urease gamma subunit family.</text>
</comment>